<keyword id="KW-1003">Cell membrane</keyword>
<keyword id="KW-0472">Membrane</keyword>
<keyword id="KW-0812">Transmembrane</keyword>
<keyword id="KW-1133">Transmembrane helix</keyword>
<sequence>MTNINRIGLTWISFLSYAFTGALVVVTGMIMGNISNYFHLSISQMSNIFTFLNAGILVSIFINSWLIEIISLKKQLIFSFILTIIAVIGIVLCNSIFLFSINMFILGLVSGITMSIGTFIITHLYSGSKRGSLLLLTDSFFSMSGMIFPIVTAYLLEKKIIWYWSYICIGAIYLLIFLLTINSSFEKFKTNTKNSKETKEKWNFNVFLLSISALLYILGQLGFISWVPQYATEIMNIDIKKTGSLVSGFWMSYMLGMWFFSFIIKFFNLYRMFIFLTSMSTILMYCFIKSENFLNQQYIIISLGFFSSAIYTIIITLASLQTKHPSPKLINLILLFGTIGTFLTFIITSPIVEAKGLYVTLISSNILYGIVFFLSILIYFNKKYERVI</sequence>
<organism>
    <name type="scientific">Buchnera aphidicola subsp. Acyrthosiphon pisum (strain 5A)</name>
    <dbReference type="NCBI Taxonomy" id="563178"/>
    <lineage>
        <taxon>Bacteria</taxon>
        <taxon>Pseudomonadati</taxon>
        <taxon>Pseudomonadota</taxon>
        <taxon>Gammaproteobacteria</taxon>
        <taxon>Enterobacterales</taxon>
        <taxon>Erwiniaceae</taxon>
        <taxon>Buchnera</taxon>
    </lineage>
</organism>
<comment type="subcellular location">
    <subcellularLocation>
        <location evidence="1">Cell membrane</location>
        <topology evidence="1">Multi-pass membrane protein</topology>
    </subcellularLocation>
</comment>
<comment type="similarity">
    <text evidence="1">Belongs to the major facilitator superfamily. TsgA family.</text>
</comment>
<gene>
    <name evidence="1" type="primary">tsgA</name>
    <name type="ordered locus">BUAP5A_528</name>
</gene>
<name>TSGA_BUCA5</name>
<evidence type="ECO:0000255" key="1">
    <source>
        <dbReference type="HAMAP-Rule" id="MF_01044"/>
    </source>
</evidence>
<reference key="1">
    <citation type="journal article" date="2009" name="Science">
        <title>The dynamics and time scale of ongoing genomic erosion in symbiotic bacteria.</title>
        <authorList>
            <person name="Moran N.A."/>
            <person name="McLaughlin H.J."/>
            <person name="Sorek R."/>
        </authorList>
    </citation>
    <scope>NUCLEOTIDE SEQUENCE [LARGE SCALE GENOMIC DNA]</scope>
    <source>
        <strain>5A</strain>
    </source>
</reference>
<feature type="chain" id="PRO_1000149593" description="Protein TsgA homolog">
    <location>
        <begin position="1"/>
        <end position="388"/>
    </location>
</feature>
<feature type="transmembrane region" description="Helical" evidence="1">
    <location>
        <begin position="11"/>
        <end position="31"/>
    </location>
</feature>
<feature type="transmembrane region" description="Helical" evidence="1">
    <location>
        <begin position="50"/>
        <end position="70"/>
    </location>
</feature>
<feature type="transmembrane region" description="Helical" evidence="1">
    <location>
        <begin position="77"/>
        <end position="97"/>
    </location>
</feature>
<feature type="transmembrane region" description="Helical" evidence="1">
    <location>
        <begin position="101"/>
        <end position="121"/>
    </location>
</feature>
<feature type="transmembrane region" description="Helical" evidence="1">
    <location>
        <begin position="133"/>
        <end position="153"/>
    </location>
</feature>
<feature type="transmembrane region" description="Helical" evidence="1">
    <location>
        <begin position="160"/>
        <end position="180"/>
    </location>
</feature>
<feature type="transmembrane region" description="Helical" evidence="1">
    <location>
        <begin position="206"/>
        <end position="226"/>
    </location>
</feature>
<feature type="transmembrane region" description="Helical" evidence="1">
    <location>
        <begin position="244"/>
        <end position="264"/>
    </location>
</feature>
<feature type="transmembrane region" description="Helical" evidence="1">
    <location>
        <begin position="268"/>
        <end position="288"/>
    </location>
</feature>
<feature type="transmembrane region" description="Helical" evidence="1">
    <location>
        <begin position="298"/>
        <end position="318"/>
    </location>
</feature>
<feature type="transmembrane region" description="Helical" evidence="1">
    <location>
        <begin position="332"/>
        <end position="352"/>
    </location>
</feature>
<feature type="transmembrane region" description="Helical" evidence="1">
    <location>
        <begin position="360"/>
        <end position="380"/>
    </location>
</feature>
<protein>
    <recommendedName>
        <fullName evidence="1">Protein TsgA homolog</fullName>
    </recommendedName>
</protein>
<dbReference type="EMBL" id="CP001161">
    <property type="protein sequence ID" value="ACL30879.1"/>
    <property type="molecule type" value="Genomic_DNA"/>
</dbReference>
<dbReference type="RefSeq" id="WP_009874486.1">
    <property type="nucleotide sequence ID" value="NC_011833.1"/>
</dbReference>
<dbReference type="SMR" id="B8D9V8"/>
<dbReference type="KEGG" id="bap:BUAP5A_528"/>
<dbReference type="HOGENOM" id="CLU_056916_0_0_6"/>
<dbReference type="OrthoDB" id="8577032at2"/>
<dbReference type="Proteomes" id="UP000006904">
    <property type="component" value="Chromosome"/>
</dbReference>
<dbReference type="GO" id="GO:0005886">
    <property type="term" value="C:plasma membrane"/>
    <property type="evidence" value="ECO:0007669"/>
    <property type="project" value="UniProtKB-SubCell"/>
</dbReference>
<dbReference type="GO" id="GO:0022857">
    <property type="term" value="F:transmembrane transporter activity"/>
    <property type="evidence" value="ECO:0007669"/>
    <property type="project" value="InterPro"/>
</dbReference>
<dbReference type="Gene3D" id="1.20.1250.20">
    <property type="entry name" value="MFS general substrate transporter like domains"/>
    <property type="match status" value="2"/>
</dbReference>
<dbReference type="HAMAP" id="MF_01044">
    <property type="entry name" value="MFS_TsgA"/>
    <property type="match status" value="1"/>
</dbReference>
<dbReference type="InterPro" id="IPR011701">
    <property type="entry name" value="MFS"/>
</dbReference>
<dbReference type="InterPro" id="IPR020846">
    <property type="entry name" value="MFS_dom"/>
</dbReference>
<dbReference type="InterPro" id="IPR036259">
    <property type="entry name" value="MFS_trans_sf"/>
</dbReference>
<dbReference type="InterPro" id="IPR023528">
    <property type="entry name" value="MFS_TsgA"/>
</dbReference>
<dbReference type="InterPro" id="IPR050375">
    <property type="entry name" value="MFS_TsgA-like"/>
</dbReference>
<dbReference type="NCBIfam" id="NF002982">
    <property type="entry name" value="PRK03699.1"/>
    <property type="match status" value="1"/>
</dbReference>
<dbReference type="PANTHER" id="PTHR43702">
    <property type="entry name" value="L-FUCOSE-PROTON SYMPORTER"/>
    <property type="match status" value="1"/>
</dbReference>
<dbReference type="PANTHER" id="PTHR43702:SF3">
    <property type="entry name" value="PROTEIN TSGA"/>
    <property type="match status" value="1"/>
</dbReference>
<dbReference type="Pfam" id="PF07690">
    <property type="entry name" value="MFS_1"/>
    <property type="match status" value="1"/>
</dbReference>
<dbReference type="SUPFAM" id="SSF103473">
    <property type="entry name" value="MFS general substrate transporter"/>
    <property type="match status" value="1"/>
</dbReference>
<dbReference type="PROSITE" id="PS50850">
    <property type="entry name" value="MFS"/>
    <property type="match status" value="1"/>
</dbReference>
<accession>B8D9V8</accession>
<proteinExistence type="inferred from homology"/>